<gene>
    <name evidence="1" type="primary">yqhA</name>
    <name type="ordered locus">ECUMN_3486</name>
</gene>
<feature type="chain" id="PRO_1000197570" description="UPF0114 protein YqhA">
    <location>
        <begin position="1"/>
        <end position="164"/>
    </location>
</feature>
<feature type="transmembrane region" description="Helical" evidence="1">
    <location>
        <begin position="15"/>
        <end position="35"/>
    </location>
</feature>
<feature type="transmembrane region" description="Helical" evidence="1">
    <location>
        <begin position="53"/>
        <end position="73"/>
    </location>
</feature>
<feature type="transmembrane region" description="Helical" evidence="1">
    <location>
        <begin position="136"/>
        <end position="156"/>
    </location>
</feature>
<accession>B7NCZ3</accession>
<name>YQHA_ECOLU</name>
<evidence type="ECO:0000255" key="1">
    <source>
        <dbReference type="HAMAP-Rule" id="MF_00143"/>
    </source>
</evidence>
<comment type="subcellular location">
    <subcellularLocation>
        <location evidence="1">Cell membrane</location>
        <topology evidence="1">Multi-pass membrane protein</topology>
    </subcellularLocation>
</comment>
<comment type="similarity">
    <text evidence="1">Belongs to the UPF0114 family.</text>
</comment>
<reference key="1">
    <citation type="journal article" date="2009" name="PLoS Genet.">
        <title>Organised genome dynamics in the Escherichia coli species results in highly diverse adaptive paths.</title>
        <authorList>
            <person name="Touchon M."/>
            <person name="Hoede C."/>
            <person name="Tenaillon O."/>
            <person name="Barbe V."/>
            <person name="Baeriswyl S."/>
            <person name="Bidet P."/>
            <person name="Bingen E."/>
            <person name="Bonacorsi S."/>
            <person name="Bouchier C."/>
            <person name="Bouvet O."/>
            <person name="Calteau A."/>
            <person name="Chiapello H."/>
            <person name="Clermont O."/>
            <person name="Cruveiller S."/>
            <person name="Danchin A."/>
            <person name="Diard M."/>
            <person name="Dossat C."/>
            <person name="Karoui M.E."/>
            <person name="Frapy E."/>
            <person name="Garry L."/>
            <person name="Ghigo J.M."/>
            <person name="Gilles A.M."/>
            <person name="Johnson J."/>
            <person name="Le Bouguenec C."/>
            <person name="Lescat M."/>
            <person name="Mangenot S."/>
            <person name="Martinez-Jehanne V."/>
            <person name="Matic I."/>
            <person name="Nassif X."/>
            <person name="Oztas S."/>
            <person name="Petit M.A."/>
            <person name="Pichon C."/>
            <person name="Rouy Z."/>
            <person name="Ruf C.S."/>
            <person name="Schneider D."/>
            <person name="Tourret J."/>
            <person name="Vacherie B."/>
            <person name="Vallenet D."/>
            <person name="Medigue C."/>
            <person name="Rocha E.P.C."/>
            <person name="Denamur E."/>
        </authorList>
    </citation>
    <scope>NUCLEOTIDE SEQUENCE [LARGE SCALE GENOMIC DNA]</scope>
    <source>
        <strain>UMN026 / ExPEC</strain>
    </source>
</reference>
<sequence>MERFLENAMYASRWLLAPVYFGLSLALVALALKFFQEIIHVLPNIFSMAESDLILVLLSLVDMTLVGGLLVMVMFSGYENFVSQLDISENKEKLNWLGKMDATSLKNKVAASIVAISSIHLLRVFMDAKNVPDNKLMWYVIIHLTFVLSAFVMGYLDRLTRHNH</sequence>
<dbReference type="EMBL" id="CU928163">
    <property type="protein sequence ID" value="CAR14643.1"/>
    <property type="molecule type" value="Genomic_DNA"/>
</dbReference>
<dbReference type="RefSeq" id="WP_000439331.1">
    <property type="nucleotide sequence ID" value="NC_011751.1"/>
</dbReference>
<dbReference type="RefSeq" id="YP_002414148.1">
    <property type="nucleotide sequence ID" value="NC_011751.1"/>
</dbReference>
<dbReference type="KEGG" id="eum:ECUMN_3486"/>
<dbReference type="PATRIC" id="fig|585056.7.peg.3661"/>
<dbReference type="HOGENOM" id="CLU_097887_1_1_6"/>
<dbReference type="Proteomes" id="UP000007097">
    <property type="component" value="Chromosome"/>
</dbReference>
<dbReference type="GO" id="GO:0005886">
    <property type="term" value="C:plasma membrane"/>
    <property type="evidence" value="ECO:0007669"/>
    <property type="project" value="UniProtKB-SubCell"/>
</dbReference>
<dbReference type="HAMAP" id="MF_00143">
    <property type="entry name" value="UPF0114"/>
    <property type="match status" value="1"/>
</dbReference>
<dbReference type="InterPro" id="IPR005134">
    <property type="entry name" value="UPF0114"/>
</dbReference>
<dbReference type="InterPro" id="IPR020761">
    <property type="entry name" value="UPF0114_bac"/>
</dbReference>
<dbReference type="NCBIfam" id="TIGR00645">
    <property type="entry name" value="HI0507"/>
    <property type="match status" value="1"/>
</dbReference>
<dbReference type="PANTHER" id="PTHR38596">
    <property type="entry name" value="UPF0114 PROTEIN YQHA"/>
    <property type="match status" value="1"/>
</dbReference>
<dbReference type="PANTHER" id="PTHR38596:SF1">
    <property type="entry name" value="UPF0114 PROTEIN YQHA"/>
    <property type="match status" value="1"/>
</dbReference>
<dbReference type="Pfam" id="PF03350">
    <property type="entry name" value="UPF0114"/>
    <property type="match status" value="1"/>
</dbReference>
<organism>
    <name type="scientific">Escherichia coli O17:K52:H18 (strain UMN026 / ExPEC)</name>
    <dbReference type="NCBI Taxonomy" id="585056"/>
    <lineage>
        <taxon>Bacteria</taxon>
        <taxon>Pseudomonadati</taxon>
        <taxon>Pseudomonadota</taxon>
        <taxon>Gammaproteobacteria</taxon>
        <taxon>Enterobacterales</taxon>
        <taxon>Enterobacteriaceae</taxon>
        <taxon>Escherichia</taxon>
    </lineage>
</organism>
<protein>
    <recommendedName>
        <fullName evidence="1">UPF0114 protein YqhA</fullName>
    </recommendedName>
</protein>
<keyword id="KW-1003">Cell membrane</keyword>
<keyword id="KW-0472">Membrane</keyword>
<keyword id="KW-0812">Transmembrane</keyword>
<keyword id="KW-1133">Transmembrane helix</keyword>
<proteinExistence type="inferred from homology"/>